<proteinExistence type="inferred from homology"/>
<gene>
    <name evidence="1" type="primary">ubiG</name>
    <name type="ordered locus">UTI89_C2513</name>
</gene>
<reference key="1">
    <citation type="journal article" date="2006" name="Proc. Natl. Acad. Sci. U.S.A.">
        <title>Identification of genes subject to positive selection in uropathogenic strains of Escherichia coli: a comparative genomics approach.</title>
        <authorList>
            <person name="Chen S.L."/>
            <person name="Hung C.-S."/>
            <person name="Xu J."/>
            <person name="Reigstad C.S."/>
            <person name="Magrini V."/>
            <person name="Sabo A."/>
            <person name="Blasiar D."/>
            <person name="Bieri T."/>
            <person name="Meyer R.R."/>
            <person name="Ozersky P."/>
            <person name="Armstrong J.R."/>
            <person name="Fulton R.S."/>
            <person name="Latreille J.P."/>
            <person name="Spieth J."/>
            <person name="Hooton T.M."/>
            <person name="Mardis E.R."/>
            <person name="Hultgren S.J."/>
            <person name="Gordon J.I."/>
        </authorList>
    </citation>
    <scope>NUCLEOTIDE SEQUENCE [LARGE SCALE GENOMIC DNA]</scope>
    <source>
        <strain>UTI89 / UPEC</strain>
    </source>
</reference>
<protein>
    <recommendedName>
        <fullName evidence="1">Ubiquinone biosynthesis O-methyltransferase</fullName>
    </recommendedName>
    <alternativeName>
        <fullName evidence="1">2-octaprenyl-6-hydroxyphenol methylase</fullName>
        <ecNumber evidence="1">2.1.1.222</ecNumber>
    </alternativeName>
    <alternativeName>
        <fullName evidence="1">3-demethylubiquinone-8 3-O-methyltransferase</fullName>
        <ecNumber evidence="1">2.1.1.64</ecNumber>
    </alternativeName>
</protein>
<comment type="function">
    <text evidence="1">O-methyltransferase that catalyzes the 2 O-methylation steps in the ubiquinone biosynthetic pathway.</text>
</comment>
<comment type="catalytic activity">
    <reaction evidence="1">
        <text>a 3-demethylubiquinol + S-adenosyl-L-methionine = a ubiquinol + S-adenosyl-L-homocysteine + H(+)</text>
        <dbReference type="Rhea" id="RHEA:44380"/>
        <dbReference type="Rhea" id="RHEA-COMP:9566"/>
        <dbReference type="Rhea" id="RHEA-COMP:10914"/>
        <dbReference type="ChEBI" id="CHEBI:15378"/>
        <dbReference type="ChEBI" id="CHEBI:17976"/>
        <dbReference type="ChEBI" id="CHEBI:57856"/>
        <dbReference type="ChEBI" id="CHEBI:59789"/>
        <dbReference type="ChEBI" id="CHEBI:84422"/>
        <dbReference type="EC" id="2.1.1.64"/>
    </reaction>
</comment>
<comment type="catalytic activity">
    <reaction evidence="1">
        <text>a 3-(all-trans-polyprenyl)benzene-1,2-diol + S-adenosyl-L-methionine = a 2-methoxy-6-(all-trans-polyprenyl)phenol + S-adenosyl-L-homocysteine + H(+)</text>
        <dbReference type="Rhea" id="RHEA:31411"/>
        <dbReference type="Rhea" id="RHEA-COMP:9550"/>
        <dbReference type="Rhea" id="RHEA-COMP:9551"/>
        <dbReference type="ChEBI" id="CHEBI:15378"/>
        <dbReference type="ChEBI" id="CHEBI:57856"/>
        <dbReference type="ChEBI" id="CHEBI:59789"/>
        <dbReference type="ChEBI" id="CHEBI:62729"/>
        <dbReference type="ChEBI" id="CHEBI:62731"/>
        <dbReference type="EC" id="2.1.1.222"/>
    </reaction>
</comment>
<comment type="pathway">
    <text evidence="1">Cofactor biosynthesis; ubiquinone biosynthesis.</text>
</comment>
<comment type="similarity">
    <text evidence="1">Belongs to the methyltransferase superfamily. UbiG/COQ3 family.</text>
</comment>
<feature type="chain" id="PRO_1000013900" description="Ubiquinone biosynthesis O-methyltransferase">
    <location>
        <begin position="1"/>
        <end position="240"/>
    </location>
</feature>
<feature type="binding site" evidence="1">
    <location>
        <position position="44"/>
    </location>
    <ligand>
        <name>S-adenosyl-L-methionine</name>
        <dbReference type="ChEBI" id="CHEBI:59789"/>
    </ligand>
</feature>
<feature type="binding site" evidence="1">
    <location>
        <position position="64"/>
    </location>
    <ligand>
        <name>S-adenosyl-L-methionine</name>
        <dbReference type="ChEBI" id="CHEBI:59789"/>
    </ligand>
</feature>
<feature type="binding site" evidence="1">
    <location>
        <position position="85"/>
    </location>
    <ligand>
        <name>S-adenosyl-L-methionine</name>
        <dbReference type="ChEBI" id="CHEBI:59789"/>
    </ligand>
</feature>
<feature type="binding site" evidence="1">
    <location>
        <position position="129"/>
    </location>
    <ligand>
        <name>S-adenosyl-L-methionine</name>
        <dbReference type="ChEBI" id="CHEBI:59789"/>
    </ligand>
</feature>
<keyword id="KW-0489">Methyltransferase</keyword>
<keyword id="KW-0949">S-adenosyl-L-methionine</keyword>
<keyword id="KW-0808">Transferase</keyword>
<keyword id="KW-0831">Ubiquinone biosynthesis</keyword>
<dbReference type="EC" id="2.1.1.222" evidence="1"/>
<dbReference type="EC" id="2.1.1.64" evidence="1"/>
<dbReference type="EMBL" id="CP000243">
    <property type="protein sequence ID" value="ABE07980.1"/>
    <property type="molecule type" value="Genomic_DNA"/>
</dbReference>
<dbReference type="RefSeq" id="WP_000990768.1">
    <property type="nucleotide sequence ID" value="NZ_CP064825.1"/>
</dbReference>
<dbReference type="SMR" id="Q1R9I4"/>
<dbReference type="KEGG" id="eci:UTI89_C2513"/>
<dbReference type="HOGENOM" id="CLU_042432_5_0_6"/>
<dbReference type="UniPathway" id="UPA00232"/>
<dbReference type="Proteomes" id="UP000001952">
    <property type="component" value="Chromosome"/>
</dbReference>
<dbReference type="GO" id="GO:0102208">
    <property type="term" value="F:2-polyprenyl-6-hydroxyphenol methylase activity"/>
    <property type="evidence" value="ECO:0007669"/>
    <property type="project" value="UniProtKB-EC"/>
</dbReference>
<dbReference type="GO" id="GO:0061542">
    <property type="term" value="F:3-demethylubiquinol 3-O-methyltransferase activity"/>
    <property type="evidence" value="ECO:0007669"/>
    <property type="project" value="UniProtKB-UniRule"/>
</dbReference>
<dbReference type="GO" id="GO:0010420">
    <property type="term" value="F:polyprenyldihydroxybenzoate methyltransferase activity"/>
    <property type="evidence" value="ECO:0007669"/>
    <property type="project" value="InterPro"/>
</dbReference>
<dbReference type="GO" id="GO:0032259">
    <property type="term" value="P:methylation"/>
    <property type="evidence" value="ECO:0007669"/>
    <property type="project" value="UniProtKB-KW"/>
</dbReference>
<dbReference type="CDD" id="cd02440">
    <property type="entry name" value="AdoMet_MTases"/>
    <property type="match status" value="1"/>
</dbReference>
<dbReference type="FunFam" id="3.40.50.150:FF:000028">
    <property type="entry name" value="Ubiquinone biosynthesis O-methyltransferase"/>
    <property type="match status" value="1"/>
</dbReference>
<dbReference type="Gene3D" id="3.40.50.150">
    <property type="entry name" value="Vaccinia Virus protein VP39"/>
    <property type="match status" value="1"/>
</dbReference>
<dbReference type="HAMAP" id="MF_00472">
    <property type="entry name" value="UbiG"/>
    <property type="match status" value="1"/>
</dbReference>
<dbReference type="InterPro" id="IPR029063">
    <property type="entry name" value="SAM-dependent_MTases_sf"/>
</dbReference>
<dbReference type="InterPro" id="IPR010233">
    <property type="entry name" value="UbiG_MeTrfase"/>
</dbReference>
<dbReference type="NCBIfam" id="TIGR01983">
    <property type="entry name" value="UbiG"/>
    <property type="match status" value="1"/>
</dbReference>
<dbReference type="PANTHER" id="PTHR43464">
    <property type="entry name" value="METHYLTRANSFERASE"/>
    <property type="match status" value="1"/>
</dbReference>
<dbReference type="PANTHER" id="PTHR43464:SF19">
    <property type="entry name" value="UBIQUINONE BIOSYNTHESIS O-METHYLTRANSFERASE, MITOCHONDRIAL"/>
    <property type="match status" value="1"/>
</dbReference>
<dbReference type="Pfam" id="PF13489">
    <property type="entry name" value="Methyltransf_23"/>
    <property type="match status" value="1"/>
</dbReference>
<dbReference type="SUPFAM" id="SSF53335">
    <property type="entry name" value="S-adenosyl-L-methionine-dependent methyltransferases"/>
    <property type="match status" value="1"/>
</dbReference>
<sequence>MNAEKSPVNHNVDHEEIAKFEAVASRWWDLEGEFKPLHRINPLRLGYIAERAGGLFGKKVLDVGCGGGILAESMAREGATVTGLDMGFEPLQVAKLHALESGIQVDYVQETVEEHAAKHAGQYDVVTCMEMLEHVPDPQSVVRACAQLVKPGGDVFFSTLNRNGKSWLMAVVGAEYILRMVPKGTHDVKKFIKPAELLGWVDQTSLKERHMTGLHYNPITNSFKLGPGVDVNYMLHTQNK</sequence>
<evidence type="ECO:0000255" key="1">
    <source>
        <dbReference type="HAMAP-Rule" id="MF_00472"/>
    </source>
</evidence>
<organism>
    <name type="scientific">Escherichia coli (strain UTI89 / UPEC)</name>
    <dbReference type="NCBI Taxonomy" id="364106"/>
    <lineage>
        <taxon>Bacteria</taxon>
        <taxon>Pseudomonadati</taxon>
        <taxon>Pseudomonadota</taxon>
        <taxon>Gammaproteobacteria</taxon>
        <taxon>Enterobacterales</taxon>
        <taxon>Enterobacteriaceae</taxon>
        <taxon>Escherichia</taxon>
    </lineage>
</organism>
<name>UBIG_ECOUT</name>
<accession>Q1R9I4</accession>